<accession>B2RHI2</accession>
<organism>
    <name type="scientific">Porphyromonas gingivalis (strain ATCC 33277 / DSM 20709 / CIP 103683 / JCM 12257 / NCTC 11834 / 2561)</name>
    <dbReference type="NCBI Taxonomy" id="431947"/>
    <lineage>
        <taxon>Bacteria</taxon>
        <taxon>Pseudomonadati</taxon>
        <taxon>Bacteroidota</taxon>
        <taxon>Bacteroidia</taxon>
        <taxon>Bacteroidales</taxon>
        <taxon>Porphyromonadaceae</taxon>
        <taxon>Porphyromonas</taxon>
    </lineage>
</organism>
<dbReference type="EMBL" id="AP009380">
    <property type="protein sequence ID" value="BAG32827.1"/>
    <property type="molecule type" value="Genomic_DNA"/>
</dbReference>
<dbReference type="GeneID" id="29255553"/>
<dbReference type="KEGG" id="pgn:PGN_0308"/>
<dbReference type="eggNOG" id="COG0759">
    <property type="taxonomic scope" value="Bacteria"/>
</dbReference>
<dbReference type="HOGENOM" id="CLU_144811_6_0_10"/>
<dbReference type="OrthoDB" id="9801753at2"/>
<dbReference type="BioCyc" id="PGIN431947:G1G2V-334-MONOMER"/>
<dbReference type="Proteomes" id="UP000008842">
    <property type="component" value="Chromosome"/>
</dbReference>
<dbReference type="GO" id="GO:0005886">
    <property type="term" value="C:plasma membrane"/>
    <property type="evidence" value="ECO:0007669"/>
    <property type="project" value="UniProtKB-SubCell"/>
</dbReference>
<dbReference type="HAMAP" id="MF_00386">
    <property type="entry name" value="UPF0161_YidD"/>
    <property type="match status" value="1"/>
</dbReference>
<dbReference type="InterPro" id="IPR002696">
    <property type="entry name" value="Membr_insert_effic_factor_YidD"/>
</dbReference>
<dbReference type="NCBIfam" id="TIGR00278">
    <property type="entry name" value="membrane protein insertion efficiency factor YidD"/>
    <property type="match status" value="1"/>
</dbReference>
<dbReference type="PANTHER" id="PTHR33383">
    <property type="entry name" value="MEMBRANE PROTEIN INSERTION EFFICIENCY FACTOR-RELATED"/>
    <property type="match status" value="1"/>
</dbReference>
<dbReference type="PANTHER" id="PTHR33383:SF1">
    <property type="entry name" value="MEMBRANE PROTEIN INSERTION EFFICIENCY FACTOR-RELATED"/>
    <property type="match status" value="1"/>
</dbReference>
<dbReference type="Pfam" id="PF01809">
    <property type="entry name" value="YidD"/>
    <property type="match status" value="1"/>
</dbReference>
<dbReference type="SMART" id="SM01234">
    <property type="entry name" value="Haemolytic"/>
    <property type="match status" value="1"/>
</dbReference>
<feature type="chain" id="PRO_1000197770" description="Putative membrane protein insertion efficiency factor">
    <location>
        <begin position="1"/>
        <end position="76"/>
    </location>
</feature>
<protein>
    <recommendedName>
        <fullName evidence="1">Putative membrane protein insertion efficiency factor</fullName>
    </recommendedName>
</protein>
<proteinExistence type="inferred from homology"/>
<reference key="1">
    <citation type="journal article" date="2008" name="DNA Res.">
        <title>Determination of the genome sequence of Porphyromonas gingivalis strain ATCC 33277 and genomic comparison with strain W83 revealed extensive genome rearrangements in P. gingivalis.</title>
        <authorList>
            <person name="Naito M."/>
            <person name="Hirakawa H."/>
            <person name="Yamashita A."/>
            <person name="Ohara N."/>
            <person name="Shoji M."/>
            <person name="Yukitake H."/>
            <person name="Nakayama K."/>
            <person name="Toh H."/>
            <person name="Yoshimura F."/>
            <person name="Kuhara S."/>
            <person name="Hattori M."/>
            <person name="Hayashi T."/>
            <person name="Nakayama K."/>
        </authorList>
    </citation>
    <scope>NUCLEOTIDE SEQUENCE [LARGE SCALE GENOMIC DNA]</scope>
    <source>
        <strain>ATCC 33277 / DSM 20709 / CIP 103683 / JCM 12257 / NCTC 11834 / 2561</strain>
    </source>
</reference>
<keyword id="KW-0997">Cell inner membrane</keyword>
<keyword id="KW-1003">Cell membrane</keyword>
<keyword id="KW-0472">Membrane</keyword>
<gene>
    <name type="ordered locus">PGN_0308</name>
</gene>
<sequence length="76" mass="8597">MRLIKAFLVQLLLLPIFFYKRFISPLTPPSCRFTPSCSSYAIEALRKYGPGKGLLLSIKRILRCHPWGGSGYDPVP</sequence>
<name>YIDD_PORG3</name>
<evidence type="ECO:0000255" key="1">
    <source>
        <dbReference type="HAMAP-Rule" id="MF_00386"/>
    </source>
</evidence>
<comment type="function">
    <text evidence="1">Could be involved in insertion of integral membrane proteins into the membrane.</text>
</comment>
<comment type="subcellular location">
    <subcellularLocation>
        <location evidence="1">Cell inner membrane</location>
        <topology evidence="1">Peripheral membrane protein</topology>
        <orientation evidence="1">Cytoplasmic side</orientation>
    </subcellularLocation>
</comment>
<comment type="similarity">
    <text evidence="1">Belongs to the UPF0161 family.</text>
</comment>